<proteinExistence type="inferred from homology"/>
<reference key="1">
    <citation type="journal article" date="2006" name="Nat. Biotechnol.">
        <title>Genome sequence of the bioplastic-producing 'Knallgas' bacterium Ralstonia eutropha H16.</title>
        <authorList>
            <person name="Pohlmann A."/>
            <person name="Fricke W.F."/>
            <person name="Reinecke F."/>
            <person name="Kusian B."/>
            <person name="Liesegang H."/>
            <person name="Cramm R."/>
            <person name="Eitinger T."/>
            <person name="Ewering C."/>
            <person name="Poetter M."/>
            <person name="Schwartz E."/>
            <person name="Strittmatter A."/>
            <person name="Voss I."/>
            <person name="Gottschalk G."/>
            <person name="Steinbuechel A."/>
            <person name="Friedrich B."/>
            <person name="Bowien B."/>
        </authorList>
    </citation>
    <scope>NUCLEOTIDE SEQUENCE [LARGE SCALE GENOMIC DNA]</scope>
    <source>
        <strain>ATCC 17699 / DSM 428 / KCTC 22496 / NCIMB 10442 / H16 / Stanier 337</strain>
    </source>
</reference>
<sequence length="92" mass="10007">MKKETWRLVAHGRVQGVGYRAACADAADDLELGGWVRNRLDGTVEVMAHGTVRQLEALQAWMEQGPPAAQVTLVEVGPGEGEFAGFEFRPTI</sequence>
<organism>
    <name type="scientific">Cupriavidus necator (strain ATCC 17699 / DSM 428 / KCTC 22496 / NCIMB 10442 / H16 / Stanier 337)</name>
    <name type="common">Ralstonia eutropha</name>
    <dbReference type="NCBI Taxonomy" id="381666"/>
    <lineage>
        <taxon>Bacteria</taxon>
        <taxon>Pseudomonadati</taxon>
        <taxon>Pseudomonadota</taxon>
        <taxon>Betaproteobacteria</taxon>
        <taxon>Burkholderiales</taxon>
        <taxon>Burkholderiaceae</taxon>
        <taxon>Cupriavidus</taxon>
    </lineage>
</organism>
<keyword id="KW-0378">Hydrolase</keyword>
<keyword id="KW-1185">Reference proteome</keyword>
<feature type="chain" id="PRO_0000326774" description="Acylphosphatase">
    <location>
        <begin position="1"/>
        <end position="92"/>
    </location>
</feature>
<feature type="domain" description="Acylphosphatase-like" evidence="1">
    <location>
        <begin position="5"/>
        <end position="90"/>
    </location>
</feature>
<feature type="active site" evidence="1">
    <location>
        <position position="20"/>
    </location>
</feature>
<feature type="active site" evidence="1">
    <location>
        <position position="38"/>
    </location>
</feature>
<protein>
    <recommendedName>
        <fullName>Acylphosphatase</fullName>
        <ecNumber>3.6.1.7</ecNumber>
    </recommendedName>
    <alternativeName>
        <fullName>Acylphosphate phosphohydrolase</fullName>
    </alternativeName>
</protein>
<comment type="catalytic activity">
    <reaction>
        <text>an acyl phosphate + H2O = a carboxylate + phosphate + H(+)</text>
        <dbReference type="Rhea" id="RHEA:14965"/>
        <dbReference type="ChEBI" id="CHEBI:15377"/>
        <dbReference type="ChEBI" id="CHEBI:15378"/>
        <dbReference type="ChEBI" id="CHEBI:29067"/>
        <dbReference type="ChEBI" id="CHEBI:43474"/>
        <dbReference type="ChEBI" id="CHEBI:59918"/>
        <dbReference type="EC" id="3.6.1.7"/>
    </reaction>
</comment>
<comment type="similarity">
    <text evidence="2">Belongs to the acylphosphatase family.</text>
</comment>
<gene>
    <name type="primary">acyP</name>
    <name type="ordered locus">H16_A3325</name>
</gene>
<dbReference type="EC" id="3.6.1.7"/>
<dbReference type="EMBL" id="AM260479">
    <property type="protein sequence ID" value="CAJ94394.1"/>
    <property type="molecule type" value="Genomic_DNA"/>
</dbReference>
<dbReference type="RefSeq" id="WP_010809896.1">
    <property type="nucleotide sequence ID" value="NZ_CP039287.1"/>
</dbReference>
<dbReference type="SMR" id="Q0K6H7"/>
<dbReference type="STRING" id="381666.H16_A3325"/>
<dbReference type="KEGG" id="reh:H16_A3325"/>
<dbReference type="eggNOG" id="COG1254">
    <property type="taxonomic scope" value="Bacteria"/>
</dbReference>
<dbReference type="HOGENOM" id="CLU_141932_3_1_4"/>
<dbReference type="OrthoDB" id="5295388at2"/>
<dbReference type="Proteomes" id="UP000008210">
    <property type="component" value="Chromosome 1"/>
</dbReference>
<dbReference type="GO" id="GO:0003998">
    <property type="term" value="F:acylphosphatase activity"/>
    <property type="evidence" value="ECO:0007669"/>
    <property type="project" value="UniProtKB-EC"/>
</dbReference>
<dbReference type="Gene3D" id="3.30.70.100">
    <property type="match status" value="1"/>
</dbReference>
<dbReference type="InterPro" id="IPR020456">
    <property type="entry name" value="Acylphosphatase"/>
</dbReference>
<dbReference type="InterPro" id="IPR001792">
    <property type="entry name" value="Acylphosphatase-like_dom"/>
</dbReference>
<dbReference type="InterPro" id="IPR036046">
    <property type="entry name" value="Acylphosphatase-like_dom_sf"/>
</dbReference>
<dbReference type="InterPro" id="IPR017968">
    <property type="entry name" value="Acylphosphatase_CS"/>
</dbReference>
<dbReference type="NCBIfam" id="NF011004">
    <property type="entry name" value="PRK14430.1"/>
    <property type="match status" value="1"/>
</dbReference>
<dbReference type="PANTHER" id="PTHR47268">
    <property type="entry name" value="ACYLPHOSPHATASE"/>
    <property type="match status" value="1"/>
</dbReference>
<dbReference type="PANTHER" id="PTHR47268:SF4">
    <property type="entry name" value="ACYLPHOSPHATASE"/>
    <property type="match status" value="1"/>
</dbReference>
<dbReference type="Pfam" id="PF00708">
    <property type="entry name" value="Acylphosphatase"/>
    <property type="match status" value="1"/>
</dbReference>
<dbReference type="SUPFAM" id="SSF54975">
    <property type="entry name" value="Acylphosphatase/BLUF domain-like"/>
    <property type="match status" value="1"/>
</dbReference>
<dbReference type="PROSITE" id="PS00151">
    <property type="entry name" value="ACYLPHOSPHATASE_2"/>
    <property type="match status" value="1"/>
</dbReference>
<dbReference type="PROSITE" id="PS51160">
    <property type="entry name" value="ACYLPHOSPHATASE_3"/>
    <property type="match status" value="1"/>
</dbReference>
<accession>Q0K6H7</accession>
<evidence type="ECO:0000255" key="1">
    <source>
        <dbReference type="PROSITE-ProRule" id="PRU00520"/>
    </source>
</evidence>
<evidence type="ECO:0000305" key="2"/>
<name>ACYP_CUPNH</name>